<sequence>MIWHVQNENFILDSTRIFMKAFHLLLFDGSLIFPECILIFGLILLLMIDSTSDQKDIPWLYFISSTSLVMSITALLFRWREEPMISFSGNFQTNNFNEIFQFLILLCSTLCIPLSVEYIECTEMAITEFLLFVLTATLGGMFLCGANDLITIFVAPECFSLCSYLLSGYTKKDVRSNEATMKYLLMGGASSSILVHGFSWLYGSSGGEIELQEIVNGLINTQMYNSPGISIALIFITVGIGFKLSPAPSHQWTPDVYEGSPTPVVAFLSVTSKVAASASATRIFDIPFYFSSNEWHLLLEILAILSMILGNLIAITQTSMKRMLAYSSIGQIGYVIIGIIVGDSNDGYASMITYMLFYISMNLGTFACIVLFGLRTGTDNIRDYAGLYTKDPFLALSLALCLLSLGGLPPLAGFFGKLYLFWCGWQAGLYFLVLIGLLTSVVSIYYYLKIIKLLMIGRNQEITPHVRNYRRSPFRSNNSIELSMIVCVIASTIPGISMNPIIAIAQDTLF</sequence>
<feature type="chain" id="PRO_0000117673" description="NAD(P)H-quinone oxidoreductase subunit 2 A, chloroplastic">
    <location>
        <begin position="1"/>
        <end position="510"/>
    </location>
</feature>
<feature type="transmembrane region" description="Helical" evidence="1">
    <location>
        <begin position="24"/>
        <end position="44"/>
    </location>
</feature>
<feature type="transmembrane region" description="Helical" evidence="1">
    <location>
        <begin position="57"/>
        <end position="77"/>
    </location>
</feature>
<feature type="transmembrane region" description="Helical" evidence="1">
    <location>
        <begin position="99"/>
        <end position="119"/>
    </location>
</feature>
<feature type="transmembrane region" description="Helical" evidence="1">
    <location>
        <begin position="124"/>
        <end position="144"/>
    </location>
</feature>
<feature type="transmembrane region" description="Helical" evidence="1">
    <location>
        <begin position="149"/>
        <end position="169"/>
    </location>
</feature>
<feature type="transmembrane region" description="Helical" evidence="1">
    <location>
        <begin position="183"/>
        <end position="203"/>
    </location>
</feature>
<feature type="transmembrane region" description="Helical" evidence="1">
    <location>
        <begin position="227"/>
        <end position="247"/>
    </location>
</feature>
<feature type="transmembrane region" description="Helical" evidence="1">
    <location>
        <begin position="295"/>
        <end position="315"/>
    </location>
</feature>
<feature type="transmembrane region" description="Helical" evidence="1">
    <location>
        <begin position="323"/>
        <end position="343"/>
    </location>
</feature>
<feature type="transmembrane region" description="Helical" evidence="1">
    <location>
        <begin position="354"/>
        <end position="374"/>
    </location>
</feature>
<feature type="transmembrane region" description="Helical" evidence="1">
    <location>
        <begin position="395"/>
        <end position="415"/>
    </location>
</feature>
<feature type="transmembrane region" description="Helical" evidence="1">
    <location>
        <begin position="418"/>
        <end position="438"/>
    </location>
</feature>
<feature type="transmembrane region" description="Helical" evidence="1">
    <location>
        <begin position="484"/>
        <end position="504"/>
    </location>
</feature>
<geneLocation type="chloroplast"/>
<reference key="1">
    <citation type="journal article" date="2004" name="DNA Res.">
        <title>Complete chloroplast genome sequence from Korea ginseng (Panax schinseng Nees) and comparative analysis of sequence evolution among 17 vascular plants.</title>
        <authorList>
            <person name="Kim K.-J."/>
            <person name="Lee H.-L."/>
        </authorList>
    </citation>
    <scope>NUCLEOTIDE SEQUENCE [LARGE SCALE GENOMIC DNA]</scope>
</reference>
<proteinExistence type="inferred from homology"/>
<name>NU2C1_PANGI</name>
<accession>P0CD24</accession>
<accession>Q68RU6</accession>
<protein>
    <recommendedName>
        <fullName evidence="1">NAD(P)H-quinone oxidoreductase subunit 2 A, chloroplastic</fullName>
        <ecNumber evidence="1">7.1.1.-</ecNumber>
    </recommendedName>
    <alternativeName>
        <fullName evidence="1">NAD(P)H dehydrogenase, subunit 2 A</fullName>
    </alternativeName>
    <alternativeName>
        <fullName evidence="1">NADH-plastoquinone oxidoreductase subunit 2 A</fullName>
    </alternativeName>
</protein>
<keyword id="KW-0150">Chloroplast</keyword>
<keyword id="KW-0472">Membrane</keyword>
<keyword id="KW-0520">NAD</keyword>
<keyword id="KW-0521">NADP</keyword>
<keyword id="KW-0934">Plastid</keyword>
<keyword id="KW-0618">Plastoquinone</keyword>
<keyword id="KW-0874">Quinone</keyword>
<keyword id="KW-0793">Thylakoid</keyword>
<keyword id="KW-1278">Translocase</keyword>
<keyword id="KW-0812">Transmembrane</keyword>
<keyword id="KW-1133">Transmembrane helix</keyword>
<keyword id="KW-0813">Transport</keyword>
<organism>
    <name type="scientific">Panax ginseng</name>
    <name type="common">Korean ginseng</name>
    <dbReference type="NCBI Taxonomy" id="4054"/>
    <lineage>
        <taxon>Eukaryota</taxon>
        <taxon>Viridiplantae</taxon>
        <taxon>Streptophyta</taxon>
        <taxon>Embryophyta</taxon>
        <taxon>Tracheophyta</taxon>
        <taxon>Spermatophyta</taxon>
        <taxon>Magnoliopsida</taxon>
        <taxon>eudicotyledons</taxon>
        <taxon>Gunneridae</taxon>
        <taxon>Pentapetalae</taxon>
        <taxon>asterids</taxon>
        <taxon>campanulids</taxon>
        <taxon>Apiales</taxon>
        <taxon>Araliaceae</taxon>
        <taxon>Panax</taxon>
    </lineage>
</organism>
<comment type="function">
    <text evidence="1">NDH shuttles electrons from NAD(P)H:plastoquinone, via FMN and iron-sulfur (Fe-S) centers, to quinones in the photosynthetic chain and possibly in a chloroplast respiratory chain. The immediate electron acceptor for the enzyme in this species is believed to be plastoquinone. Couples the redox reaction to proton translocation, and thus conserves the redox energy in a proton gradient.</text>
</comment>
<comment type="catalytic activity">
    <reaction evidence="1">
        <text>a plastoquinone + NADH + (n+1) H(+)(in) = a plastoquinol + NAD(+) + n H(+)(out)</text>
        <dbReference type="Rhea" id="RHEA:42608"/>
        <dbReference type="Rhea" id="RHEA-COMP:9561"/>
        <dbReference type="Rhea" id="RHEA-COMP:9562"/>
        <dbReference type="ChEBI" id="CHEBI:15378"/>
        <dbReference type="ChEBI" id="CHEBI:17757"/>
        <dbReference type="ChEBI" id="CHEBI:57540"/>
        <dbReference type="ChEBI" id="CHEBI:57945"/>
        <dbReference type="ChEBI" id="CHEBI:62192"/>
    </reaction>
</comment>
<comment type="catalytic activity">
    <reaction evidence="1">
        <text>a plastoquinone + NADPH + (n+1) H(+)(in) = a plastoquinol + NADP(+) + n H(+)(out)</text>
        <dbReference type="Rhea" id="RHEA:42612"/>
        <dbReference type="Rhea" id="RHEA-COMP:9561"/>
        <dbReference type="Rhea" id="RHEA-COMP:9562"/>
        <dbReference type="ChEBI" id="CHEBI:15378"/>
        <dbReference type="ChEBI" id="CHEBI:17757"/>
        <dbReference type="ChEBI" id="CHEBI:57783"/>
        <dbReference type="ChEBI" id="CHEBI:58349"/>
        <dbReference type="ChEBI" id="CHEBI:62192"/>
    </reaction>
</comment>
<comment type="subunit">
    <text evidence="1">NDH is composed of at least 16 different subunits, 5 of which are encoded in the nucleus.</text>
</comment>
<comment type="subcellular location">
    <subcellularLocation>
        <location evidence="1">Plastid</location>
        <location evidence="1">Chloroplast thylakoid membrane</location>
        <topology evidence="1">Multi-pass membrane protein</topology>
    </subcellularLocation>
</comment>
<comment type="similarity">
    <text evidence="1">Belongs to the complex I subunit 2 family.</text>
</comment>
<evidence type="ECO:0000255" key="1">
    <source>
        <dbReference type="HAMAP-Rule" id="MF_00445"/>
    </source>
</evidence>
<gene>
    <name evidence="1" type="primary">ndhB-A</name>
    <name type="ORF">PSC0959</name>
</gene>
<dbReference type="EC" id="7.1.1.-" evidence="1"/>
<dbReference type="EMBL" id="AY582139">
    <property type="protein sequence ID" value="AAT98554.1"/>
    <property type="molecule type" value="Genomic_DNA"/>
</dbReference>
<dbReference type="SMR" id="P0CD24"/>
<dbReference type="GO" id="GO:0009535">
    <property type="term" value="C:chloroplast thylakoid membrane"/>
    <property type="evidence" value="ECO:0007669"/>
    <property type="project" value="UniProtKB-SubCell"/>
</dbReference>
<dbReference type="GO" id="GO:0008137">
    <property type="term" value="F:NADH dehydrogenase (ubiquinone) activity"/>
    <property type="evidence" value="ECO:0007669"/>
    <property type="project" value="InterPro"/>
</dbReference>
<dbReference type="GO" id="GO:0048038">
    <property type="term" value="F:quinone binding"/>
    <property type="evidence" value="ECO:0007669"/>
    <property type="project" value="UniProtKB-KW"/>
</dbReference>
<dbReference type="GO" id="GO:0042773">
    <property type="term" value="P:ATP synthesis coupled electron transport"/>
    <property type="evidence" value="ECO:0007669"/>
    <property type="project" value="InterPro"/>
</dbReference>
<dbReference type="GO" id="GO:0019684">
    <property type="term" value="P:photosynthesis, light reaction"/>
    <property type="evidence" value="ECO:0007669"/>
    <property type="project" value="UniProtKB-UniRule"/>
</dbReference>
<dbReference type="HAMAP" id="MF_00445">
    <property type="entry name" value="NDH1_NuoN_1"/>
    <property type="match status" value="1"/>
</dbReference>
<dbReference type="InterPro" id="IPR010096">
    <property type="entry name" value="NADH-Q_OxRdtase_suN/2"/>
</dbReference>
<dbReference type="InterPro" id="IPR001750">
    <property type="entry name" value="ND/Mrp_TM"/>
</dbReference>
<dbReference type="InterPro" id="IPR045693">
    <property type="entry name" value="Ndh2_N"/>
</dbReference>
<dbReference type="NCBIfam" id="TIGR01770">
    <property type="entry name" value="NDH_I_N"/>
    <property type="match status" value="1"/>
</dbReference>
<dbReference type="NCBIfam" id="NF002701">
    <property type="entry name" value="PRK02504.1"/>
    <property type="match status" value="1"/>
</dbReference>
<dbReference type="PANTHER" id="PTHR22773">
    <property type="entry name" value="NADH DEHYDROGENASE"/>
    <property type="match status" value="1"/>
</dbReference>
<dbReference type="Pfam" id="PF19530">
    <property type="entry name" value="Ndh2_N"/>
    <property type="match status" value="1"/>
</dbReference>
<dbReference type="Pfam" id="PF00361">
    <property type="entry name" value="Proton_antipo_M"/>
    <property type="match status" value="1"/>
</dbReference>
<dbReference type="PRINTS" id="PR01434">
    <property type="entry name" value="NADHDHGNASE5"/>
</dbReference>